<accession>A6U2Q1</accession>
<gene>
    <name evidence="1" type="primary">metK</name>
    <name type="ordered locus">SaurJH1_1877</name>
</gene>
<comment type="function">
    <text evidence="1">Catalyzes the formation of S-adenosylmethionine (AdoMet) from methionine and ATP. The overall synthetic reaction is composed of two sequential steps, AdoMet formation and the subsequent tripolyphosphate hydrolysis which occurs prior to release of AdoMet from the enzyme.</text>
</comment>
<comment type="catalytic activity">
    <reaction evidence="1">
        <text>L-methionine + ATP + H2O = S-adenosyl-L-methionine + phosphate + diphosphate</text>
        <dbReference type="Rhea" id="RHEA:21080"/>
        <dbReference type="ChEBI" id="CHEBI:15377"/>
        <dbReference type="ChEBI" id="CHEBI:30616"/>
        <dbReference type="ChEBI" id="CHEBI:33019"/>
        <dbReference type="ChEBI" id="CHEBI:43474"/>
        <dbReference type="ChEBI" id="CHEBI:57844"/>
        <dbReference type="ChEBI" id="CHEBI:59789"/>
        <dbReference type="EC" id="2.5.1.6"/>
    </reaction>
</comment>
<comment type="cofactor">
    <cofactor evidence="1">
        <name>Mg(2+)</name>
        <dbReference type="ChEBI" id="CHEBI:18420"/>
    </cofactor>
    <text evidence="1">Binds 2 divalent ions per subunit.</text>
</comment>
<comment type="cofactor">
    <cofactor evidence="1">
        <name>K(+)</name>
        <dbReference type="ChEBI" id="CHEBI:29103"/>
    </cofactor>
    <text evidence="1">Binds 1 potassium ion per subunit.</text>
</comment>
<comment type="pathway">
    <text evidence="1">Amino-acid biosynthesis; S-adenosyl-L-methionine biosynthesis; S-adenosyl-L-methionine from L-methionine: step 1/1.</text>
</comment>
<comment type="subunit">
    <text evidence="1">Homotetramer; dimer of dimers.</text>
</comment>
<comment type="subcellular location">
    <subcellularLocation>
        <location evidence="1">Cytoplasm</location>
    </subcellularLocation>
</comment>
<comment type="similarity">
    <text evidence="1">Belongs to the AdoMet synthase family.</text>
</comment>
<keyword id="KW-0067">ATP-binding</keyword>
<keyword id="KW-0963">Cytoplasm</keyword>
<keyword id="KW-0460">Magnesium</keyword>
<keyword id="KW-0479">Metal-binding</keyword>
<keyword id="KW-0547">Nucleotide-binding</keyword>
<keyword id="KW-0554">One-carbon metabolism</keyword>
<keyword id="KW-0630">Potassium</keyword>
<keyword id="KW-0808">Transferase</keyword>
<feature type="chain" id="PRO_1000075396" description="S-adenosylmethionine synthase">
    <location>
        <begin position="1"/>
        <end position="398"/>
    </location>
</feature>
<feature type="region of interest" description="Flexible loop" evidence="1">
    <location>
        <begin position="101"/>
        <end position="111"/>
    </location>
</feature>
<feature type="binding site" description="in other chain" evidence="1">
    <location>
        <position position="17"/>
    </location>
    <ligand>
        <name>ATP</name>
        <dbReference type="ChEBI" id="CHEBI:30616"/>
        <note>ligand shared between two neighboring subunits</note>
    </ligand>
</feature>
<feature type="binding site" evidence="1">
    <location>
        <position position="19"/>
    </location>
    <ligand>
        <name>Mg(2+)</name>
        <dbReference type="ChEBI" id="CHEBI:18420"/>
    </ligand>
</feature>
<feature type="binding site" evidence="1">
    <location>
        <position position="45"/>
    </location>
    <ligand>
        <name>K(+)</name>
        <dbReference type="ChEBI" id="CHEBI:29103"/>
    </ligand>
</feature>
<feature type="binding site" description="in other chain" evidence="1">
    <location>
        <position position="58"/>
    </location>
    <ligand>
        <name>L-methionine</name>
        <dbReference type="ChEBI" id="CHEBI:57844"/>
        <note>ligand shared between two neighboring subunits</note>
    </ligand>
</feature>
<feature type="binding site" description="in other chain" evidence="1">
    <location>
        <position position="101"/>
    </location>
    <ligand>
        <name>L-methionine</name>
        <dbReference type="ChEBI" id="CHEBI:57844"/>
        <note>ligand shared between two neighboring subunits</note>
    </ligand>
</feature>
<feature type="binding site" description="in other chain" evidence="1">
    <location>
        <begin position="176"/>
        <end position="178"/>
    </location>
    <ligand>
        <name>ATP</name>
        <dbReference type="ChEBI" id="CHEBI:30616"/>
        <note>ligand shared between two neighboring subunits</note>
    </ligand>
</feature>
<feature type="binding site" description="in other chain" evidence="1">
    <location>
        <begin position="243"/>
        <end position="244"/>
    </location>
    <ligand>
        <name>ATP</name>
        <dbReference type="ChEBI" id="CHEBI:30616"/>
        <note>ligand shared between two neighboring subunits</note>
    </ligand>
</feature>
<feature type="binding site" evidence="1">
    <location>
        <position position="252"/>
    </location>
    <ligand>
        <name>ATP</name>
        <dbReference type="ChEBI" id="CHEBI:30616"/>
        <note>ligand shared between two neighboring subunits</note>
    </ligand>
</feature>
<feature type="binding site" evidence="1">
    <location>
        <position position="252"/>
    </location>
    <ligand>
        <name>L-methionine</name>
        <dbReference type="ChEBI" id="CHEBI:57844"/>
        <note>ligand shared between two neighboring subunits</note>
    </ligand>
</feature>
<feature type="binding site" description="in other chain" evidence="1">
    <location>
        <begin position="258"/>
        <end position="259"/>
    </location>
    <ligand>
        <name>ATP</name>
        <dbReference type="ChEBI" id="CHEBI:30616"/>
        <note>ligand shared between two neighboring subunits</note>
    </ligand>
</feature>
<feature type="binding site" evidence="1">
    <location>
        <position position="279"/>
    </location>
    <ligand>
        <name>ATP</name>
        <dbReference type="ChEBI" id="CHEBI:30616"/>
        <note>ligand shared between two neighboring subunits</note>
    </ligand>
</feature>
<feature type="binding site" description="in other chain" evidence="1">
    <location>
        <position position="283"/>
    </location>
    <ligand>
        <name>L-methionine</name>
        <dbReference type="ChEBI" id="CHEBI:57844"/>
        <note>ligand shared between two neighboring subunits</note>
    </ligand>
</feature>
<evidence type="ECO:0000255" key="1">
    <source>
        <dbReference type="HAMAP-Rule" id="MF_00086"/>
    </source>
</evidence>
<reference key="1">
    <citation type="submission" date="2007-06" db="EMBL/GenBank/DDBJ databases">
        <title>Complete sequence of chromosome of Staphylococcus aureus subsp. aureus JH1.</title>
        <authorList>
            <consortium name="US DOE Joint Genome Institute"/>
            <person name="Copeland A."/>
            <person name="Lucas S."/>
            <person name="Lapidus A."/>
            <person name="Barry K."/>
            <person name="Detter J.C."/>
            <person name="Glavina del Rio T."/>
            <person name="Hammon N."/>
            <person name="Israni S."/>
            <person name="Dalin E."/>
            <person name="Tice H."/>
            <person name="Pitluck S."/>
            <person name="Chain P."/>
            <person name="Malfatti S."/>
            <person name="Shin M."/>
            <person name="Vergez L."/>
            <person name="Schmutz J."/>
            <person name="Larimer F."/>
            <person name="Land M."/>
            <person name="Hauser L."/>
            <person name="Kyrpides N."/>
            <person name="Ivanova N."/>
            <person name="Tomasz A."/>
            <person name="Richardson P."/>
        </authorList>
    </citation>
    <scope>NUCLEOTIDE SEQUENCE [LARGE SCALE GENOMIC DNA]</scope>
    <source>
        <strain>JH1</strain>
    </source>
</reference>
<dbReference type="EC" id="2.5.1.6" evidence="1"/>
<dbReference type="EMBL" id="CP000736">
    <property type="protein sequence ID" value="ABR52719.1"/>
    <property type="molecule type" value="Genomic_DNA"/>
</dbReference>
<dbReference type="SMR" id="A6U2Q1"/>
<dbReference type="KEGG" id="sah:SaurJH1_1877"/>
<dbReference type="HOGENOM" id="CLU_041802_1_1_9"/>
<dbReference type="UniPathway" id="UPA00315">
    <property type="reaction ID" value="UER00080"/>
</dbReference>
<dbReference type="GO" id="GO:0005737">
    <property type="term" value="C:cytoplasm"/>
    <property type="evidence" value="ECO:0007669"/>
    <property type="project" value="UniProtKB-SubCell"/>
</dbReference>
<dbReference type="GO" id="GO:0005524">
    <property type="term" value="F:ATP binding"/>
    <property type="evidence" value="ECO:0007669"/>
    <property type="project" value="UniProtKB-UniRule"/>
</dbReference>
<dbReference type="GO" id="GO:0000287">
    <property type="term" value="F:magnesium ion binding"/>
    <property type="evidence" value="ECO:0007669"/>
    <property type="project" value="UniProtKB-UniRule"/>
</dbReference>
<dbReference type="GO" id="GO:0004478">
    <property type="term" value="F:methionine adenosyltransferase activity"/>
    <property type="evidence" value="ECO:0007669"/>
    <property type="project" value="UniProtKB-UniRule"/>
</dbReference>
<dbReference type="GO" id="GO:0006730">
    <property type="term" value="P:one-carbon metabolic process"/>
    <property type="evidence" value="ECO:0007669"/>
    <property type="project" value="UniProtKB-KW"/>
</dbReference>
<dbReference type="GO" id="GO:0006556">
    <property type="term" value="P:S-adenosylmethionine biosynthetic process"/>
    <property type="evidence" value="ECO:0007669"/>
    <property type="project" value="UniProtKB-UniRule"/>
</dbReference>
<dbReference type="CDD" id="cd18079">
    <property type="entry name" value="S-AdoMet_synt"/>
    <property type="match status" value="1"/>
</dbReference>
<dbReference type="FunFam" id="3.30.300.10:FF:000003">
    <property type="entry name" value="S-adenosylmethionine synthase"/>
    <property type="match status" value="1"/>
</dbReference>
<dbReference type="FunFam" id="3.30.300.10:FF:000004">
    <property type="entry name" value="S-adenosylmethionine synthase"/>
    <property type="match status" value="1"/>
</dbReference>
<dbReference type="Gene3D" id="3.30.300.10">
    <property type="match status" value="3"/>
</dbReference>
<dbReference type="HAMAP" id="MF_00086">
    <property type="entry name" value="S_AdoMet_synth1"/>
    <property type="match status" value="1"/>
</dbReference>
<dbReference type="InterPro" id="IPR022631">
    <property type="entry name" value="ADOMET_SYNTHASE_CS"/>
</dbReference>
<dbReference type="InterPro" id="IPR022630">
    <property type="entry name" value="S-AdoMet_synt_C"/>
</dbReference>
<dbReference type="InterPro" id="IPR022629">
    <property type="entry name" value="S-AdoMet_synt_central"/>
</dbReference>
<dbReference type="InterPro" id="IPR022628">
    <property type="entry name" value="S-AdoMet_synt_N"/>
</dbReference>
<dbReference type="InterPro" id="IPR002133">
    <property type="entry name" value="S-AdoMet_synthetase"/>
</dbReference>
<dbReference type="InterPro" id="IPR022636">
    <property type="entry name" value="S-AdoMet_synthetase_sfam"/>
</dbReference>
<dbReference type="NCBIfam" id="TIGR01034">
    <property type="entry name" value="metK"/>
    <property type="match status" value="1"/>
</dbReference>
<dbReference type="PANTHER" id="PTHR11964">
    <property type="entry name" value="S-ADENOSYLMETHIONINE SYNTHETASE"/>
    <property type="match status" value="1"/>
</dbReference>
<dbReference type="Pfam" id="PF02773">
    <property type="entry name" value="S-AdoMet_synt_C"/>
    <property type="match status" value="1"/>
</dbReference>
<dbReference type="Pfam" id="PF02772">
    <property type="entry name" value="S-AdoMet_synt_M"/>
    <property type="match status" value="1"/>
</dbReference>
<dbReference type="Pfam" id="PF00438">
    <property type="entry name" value="S-AdoMet_synt_N"/>
    <property type="match status" value="1"/>
</dbReference>
<dbReference type="PIRSF" id="PIRSF000497">
    <property type="entry name" value="MAT"/>
    <property type="match status" value="1"/>
</dbReference>
<dbReference type="SUPFAM" id="SSF55973">
    <property type="entry name" value="S-adenosylmethionine synthetase"/>
    <property type="match status" value="3"/>
</dbReference>
<dbReference type="PROSITE" id="PS00376">
    <property type="entry name" value="ADOMET_SYNTHASE_1"/>
    <property type="match status" value="1"/>
</dbReference>
<dbReference type="PROSITE" id="PS00377">
    <property type="entry name" value="ADOMET_SYNTHASE_2"/>
    <property type="match status" value="1"/>
</dbReference>
<protein>
    <recommendedName>
        <fullName evidence="1">S-adenosylmethionine synthase</fullName>
        <shortName evidence="1">AdoMet synthase</shortName>
        <ecNumber evidence="1">2.5.1.6</ecNumber>
    </recommendedName>
    <alternativeName>
        <fullName evidence="1">MAT</fullName>
    </alternativeName>
    <alternativeName>
        <fullName evidence="1">Methionine adenosyltransferase</fullName>
    </alternativeName>
</protein>
<name>METK_STAA2</name>
<organism>
    <name type="scientific">Staphylococcus aureus (strain JH1)</name>
    <dbReference type="NCBI Taxonomy" id="359787"/>
    <lineage>
        <taxon>Bacteria</taxon>
        <taxon>Bacillati</taxon>
        <taxon>Bacillota</taxon>
        <taxon>Bacilli</taxon>
        <taxon>Bacillales</taxon>
        <taxon>Staphylococcaceae</taxon>
        <taxon>Staphylococcus</taxon>
    </lineage>
</organism>
<sequence length="398" mass="43790">MLNNKRLFTSESVTEGHPDKIADQVSDAILDAILKDDPNARVACETTVTTGMALIAGEISTTTYVDIPKVVRETIKEIGYTRAKYGYDYETMAILTAIDEQSPDIAQGVDKALEYRDKDSEEEIEATGAGDQGLMFGYATNETETYMPLAIYLSHQLAKRLSDVRKDGTLNYLRPDGKVQVTVEYDENDNPVRIDTIVVSTQHADDVTLEQIQEDIKAHVIYPTVPENLINEQTKFYINPTGRFVIGGPQGDAGLTGRKIIVDTYGGYARHGGGCFSGKDPTKVDRSAAYAARYVAKNIVAAGLADQCEVQLAYAIGVAEPVSIAIDTFGTGKVSEGQLVEAVRKHFDLRPAGIIKMLDLKQPIYKQTAAYGHFGRTDVLFPWEKLDKVEELKDAVKY</sequence>
<proteinExistence type="inferred from homology"/>